<gene>
    <name type="primary">Apoe</name>
</gene>
<evidence type="ECO:0000250" key="1">
    <source>
        <dbReference type="UniProtKB" id="P02649"/>
    </source>
</evidence>
<evidence type="ECO:0000250" key="2">
    <source>
        <dbReference type="UniProtKB" id="P02650"/>
    </source>
</evidence>
<evidence type="ECO:0000250" key="3">
    <source>
        <dbReference type="UniProtKB" id="P08226"/>
    </source>
</evidence>
<evidence type="ECO:0000255" key="4"/>
<evidence type="ECO:0000305" key="5"/>
<reference key="1">
    <citation type="submission" date="2020-02" db="EMBL/GenBank/DDBJ databases">
        <title>Population history of the black rat revealed by modern and ancient genomes.</title>
        <authorList>
            <person name="Yu H."/>
            <person name="Pruefer K."/>
            <person name="Clayton S."/>
            <person name="Taylor W."/>
            <person name="Conroy C.J."/>
            <person name="Boivin N."/>
            <person name="Krause J."/>
        </authorList>
    </citation>
    <scope>NUCLEOTIDE SEQUENCE [LARGE SCALE GENOMIC DNA]</scope>
    <source>
        <tissue>Liver</tissue>
    </source>
</reference>
<reference key="2">
    <citation type="unpublished observations" date="2021-07">
        <authorList>
            <person name="Puppione D.L."/>
        </authorList>
    </citation>
    <scope>IDENTIFICATION</scope>
</reference>
<sequence>MKALWALLLVPLLTGCLAEGELEVTDQLPGQSNQPWEQALNRFWDYLRWVQTLSDQVQEELQSSQVTQELTVLMEDTMTEVKAYKKELEEQLGPVAEETRARLAKEVQAAQARLGADMEDLRNRLGQYRNEVNTMLGQSTEELRSRLSTHLRKMRKRLMRDADDLQKRLAVYKAGAQEGAERGVSAIRERLGPLVEQGRQRTANLGSGAAQPLRDRAQALSDRIRGRLEEVGNQARDRLEEVRDQMEDVRSKMEEQTQQIRLQAEVFQARLKGWFEPLVEDMQRQWANLMEKIQASVATNSIASTTVPLENQ</sequence>
<protein>
    <recommendedName>
        <fullName>Apolipoprotein E</fullName>
        <shortName>Apo-E</shortName>
    </recommendedName>
</protein>
<organism>
    <name type="scientific">Rattus rattus</name>
    <name type="common">Black rat</name>
    <dbReference type="NCBI Taxonomy" id="10117"/>
    <lineage>
        <taxon>Eukaryota</taxon>
        <taxon>Metazoa</taxon>
        <taxon>Chordata</taxon>
        <taxon>Craniata</taxon>
        <taxon>Vertebrata</taxon>
        <taxon>Euteleostomi</taxon>
        <taxon>Mammalia</taxon>
        <taxon>Eutheria</taxon>
        <taxon>Euarchontoglires</taxon>
        <taxon>Glires</taxon>
        <taxon>Rodentia</taxon>
        <taxon>Myomorpha</taxon>
        <taxon>Muroidea</taxon>
        <taxon>Muridae</taxon>
        <taxon>Murinae</taxon>
        <taxon>Rattus</taxon>
    </lineage>
</organism>
<dbReference type="EMBL" id="JAALGF010003117">
    <property type="status" value="NOT_ANNOTATED_CDS"/>
    <property type="molecule type" value="Genomic_DNA"/>
</dbReference>
<dbReference type="SMR" id="P0DUZ8"/>
<dbReference type="GO" id="GO:0042627">
    <property type="term" value="C:chylomicron"/>
    <property type="evidence" value="ECO:0007669"/>
    <property type="project" value="UniProtKB-KW"/>
</dbReference>
<dbReference type="GO" id="GO:0070062">
    <property type="term" value="C:extracellular exosome"/>
    <property type="evidence" value="ECO:0000250"/>
    <property type="project" value="UniProtKB"/>
</dbReference>
<dbReference type="GO" id="GO:0034364">
    <property type="term" value="C:high-density lipoprotein particle"/>
    <property type="evidence" value="ECO:0007669"/>
    <property type="project" value="UniProtKB-KW"/>
</dbReference>
<dbReference type="GO" id="GO:0034362">
    <property type="term" value="C:low-density lipoprotein particle"/>
    <property type="evidence" value="ECO:0007669"/>
    <property type="project" value="TreeGrafter"/>
</dbReference>
<dbReference type="GO" id="GO:0097487">
    <property type="term" value="C:multivesicular body, internal vesicle"/>
    <property type="evidence" value="ECO:0000250"/>
    <property type="project" value="UniProtKB"/>
</dbReference>
<dbReference type="GO" id="GO:0034361">
    <property type="term" value="C:very-low-density lipoprotein particle"/>
    <property type="evidence" value="ECO:0007669"/>
    <property type="project" value="UniProtKB-KW"/>
</dbReference>
<dbReference type="GO" id="GO:0120020">
    <property type="term" value="F:cholesterol transfer activity"/>
    <property type="evidence" value="ECO:0007669"/>
    <property type="project" value="TreeGrafter"/>
</dbReference>
<dbReference type="GO" id="GO:0008201">
    <property type="term" value="F:heparin binding"/>
    <property type="evidence" value="ECO:0007669"/>
    <property type="project" value="UniProtKB-KW"/>
</dbReference>
<dbReference type="GO" id="GO:0060228">
    <property type="term" value="F:phosphatidylcholine-sterol O-acyltransferase activator activity"/>
    <property type="evidence" value="ECO:0007669"/>
    <property type="project" value="TreeGrafter"/>
</dbReference>
<dbReference type="GO" id="GO:0005543">
    <property type="term" value="F:phospholipid binding"/>
    <property type="evidence" value="ECO:0007669"/>
    <property type="project" value="TreeGrafter"/>
</dbReference>
<dbReference type="GO" id="GO:0055090">
    <property type="term" value="P:acylglycerol homeostasis"/>
    <property type="evidence" value="ECO:0007669"/>
    <property type="project" value="TreeGrafter"/>
</dbReference>
<dbReference type="GO" id="GO:0033344">
    <property type="term" value="P:cholesterol efflux"/>
    <property type="evidence" value="ECO:0007669"/>
    <property type="project" value="TreeGrafter"/>
</dbReference>
<dbReference type="GO" id="GO:0008203">
    <property type="term" value="P:cholesterol metabolic process"/>
    <property type="evidence" value="ECO:0007669"/>
    <property type="project" value="TreeGrafter"/>
</dbReference>
<dbReference type="GO" id="GO:0042157">
    <property type="term" value="P:lipoprotein metabolic process"/>
    <property type="evidence" value="ECO:0007669"/>
    <property type="project" value="InterPro"/>
</dbReference>
<dbReference type="GO" id="GO:0032438">
    <property type="term" value="P:melanosome organization"/>
    <property type="evidence" value="ECO:0000250"/>
    <property type="project" value="UniProtKB"/>
</dbReference>
<dbReference type="GO" id="GO:0033700">
    <property type="term" value="P:phospholipid efflux"/>
    <property type="evidence" value="ECO:0007669"/>
    <property type="project" value="TreeGrafter"/>
</dbReference>
<dbReference type="FunFam" id="1.20.120.20:FF:000002">
    <property type="entry name" value="Apolipoprotein E"/>
    <property type="match status" value="1"/>
</dbReference>
<dbReference type="FunFam" id="1.20.120.20:FF:000003">
    <property type="entry name" value="Apolipoprotein E"/>
    <property type="match status" value="1"/>
</dbReference>
<dbReference type="Gene3D" id="1.20.120.20">
    <property type="entry name" value="Apolipoprotein"/>
    <property type="match status" value="2"/>
</dbReference>
<dbReference type="InterPro" id="IPR000074">
    <property type="entry name" value="ApoA_E"/>
</dbReference>
<dbReference type="InterPro" id="IPR050163">
    <property type="entry name" value="Apolipoprotein_A1/A4/E"/>
</dbReference>
<dbReference type="PANTHER" id="PTHR18976">
    <property type="entry name" value="APOLIPOPROTEIN"/>
    <property type="match status" value="1"/>
</dbReference>
<dbReference type="PANTHER" id="PTHR18976:SF2">
    <property type="entry name" value="APOLIPOPROTEIN E"/>
    <property type="match status" value="1"/>
</dbReference>
<dbReference type="Pfam" id="PF01442">
    <property type="entry name" value="Apolipoprotein"/>
    <property type="match status" value="1"/>
</dbReference>
<dbReference type="SUPFAM" id="SSF58113">
    <property type="entry name" value="Apolipoprotein A-I"/>
    <property type="match status" value="1"/>
</dbReference>
<name>APOE_RATRT</name>
<accession>P0DUZ8</accession>
<keyword id="KW-0162">Chylomicron</keyword>
<keyword id="KW-0967">Endosome</keyword>
<keyword id="KW-0272">Extracellular matrix</keyword>
<keyword id="KW-0325">Glycoprotein</keyword>
<keyword id="KW-0345">HDL</keyword>
<keyword id="KW-0358">Heparin-binding</keyword>
<keyword id="KW-0445">Lipid transport</keyword>
<keyword id="KW-0446">Lipid-binding</keyword>
<keyword id="KW-0558">Oxidation</keyword>
<keyword id="KW-0597">Phosphoprotein</keyword>
<keyword id="KW-0677">Repeat</keyword>
<keyword id="KW-0964">Secreted</keyword>
<keyword id="KW-0732">Signal</keyword>
<keyword id="KW-0813">Transport</keyword>
<keyword id="KW-0850">VLDL</keyword>
<proteinExistence type="inferred from homology"/>
<feature type="signal peptide" evidence="4">
    <location>
        <begin position="1"/>
        <end position="18"/>
    </location>
</feature>
<feature type="chain" id="PRO_0000454022" description="Apolipoprotein E">
    <location>
        <begin position="19"/>
        <end position="312"/>
    </location>
</feature>
<feature type="repeat" description="1">
    <location>
        <begin position="72"/>
        <end position="93"/>
    </location>
</feature>
<feature type="repeat" description="2">
    <location>
        <begin position="94"/>
        <end position="115"/>
    </location>
</feature>
<feature type="repeat" description="3">
    <location>
        <begin position="116"/>
        <end position="137"/>
    </location>
</feature>
<feature type="repeat" description="4">
    <location>
        <begin position="138"/>
        <end position="159"/>
    </location>
</feature>
<feature type="repeat" description="5">
    <location>
        <begin position="160"/>
        <end position="181"/>
    </location>
</feature>
<feature type="repeat" description="6">
    <location>
        <begin position="182"/>
        <end position="203"/>
    </location>
</feature>
<feature type="repeat" description="7">
    <location>
        <begin position="204"/>
        <end position="225"/>
    </location>
</feature>
<feature type="repeat" description="8">
    <location>
        <begin position="226"/>
        <end position="247"/>
    </location>
</feature>
<feature type="region of interest" description="8 X 22 AA approximate tandem repeats">
    <location>
        <begin position="72"/>
        <end position="247"/>
    </location>
</feature>
<feature type="region of interest" description="LDL and other lipoprotein receptors binding" evidence="1">
    <location>
        <begin position="150"/>
        <end position="160"/>
    </location>
</feature>
<feature type="region of interest" description="LDL receptor binding" evidence="1">
    <location>
        <begin position="150"/>
        <end position="160"/>
    </location>
</feature>
<feature type="region of interest" description="Lipid-binding and lipoprotein association" evidence="1">
    <location>
        <begin position="202"/>
        <end position="282"/>
    </location>
</feature>
<feature type="region of interest" description="Homooligomerization" evidence="1">
    <location>
        <begin position="258"/>
        <end position="312"/>
    </location>
</feature>
<feature type="region of interest" description="Specificity for association with VLDL" evidence="1">
    <location>
        <begin position="270"/>
        <end position="282"/>
    </location>
</feature>
<feature type="binding site" evidence="1">
    <location>
        <begin position="154"/>
        <end position="157"/>
    </location>
    <ligand>
        <name>heparin</name>
        <dbReference type="ChEBI" id="CHEBI:28304"/>
    </ligand>
</feature>
<feature type="binding site" evidence="1">
    <location>
        <begin position="221"/>
        <end position="228"/>
    </location>
    <ligand>
        <name>heparin</name>
        <dbReference type="ChEBI" id="CHEBI:28304"/>
    </ligand>
</feature>
<feature type="modified residue" description="Methionine sulfoxide" evidence="3">
    <location>
        <position position="135"/>
    </location>
</feature>
<feature type="modified residue" description="Phosphoserine" evidence="2">
    <location>
        <position position="139"/>
    </location>
</feature>
<comment type="function">
    <text evidence="1">APOE is an apolipoprotein, a protein associating with lipid particles, that mainly functions in lipoprotein-mediated lipid transport between organs via the plasma and interstitial fluids. APOE is a core component of plasma lipoproteins and is involved in their production, conversion and clearance. Apolipoproteins are amphipathic molecules that interact both with lipids of the lipoprotein particle core and the aqueous environment of the plasma. As such, APOE associates with chylomicrons, chylomicron remnants, very low density lipoproteins (VLDL) and intermediate density lipoproteins (IDL) but shows a preferential binding to high-density lipoproteins (HDL). It also binds a wide range of cellular receptors including the LDL receptor/LDLR, the LDL receptor-related proteins LRP1, LRP2 and LRP8 and the very low-density lipoprotein receptor/VLDLR that mediate the cellular uptake of the APOE-containing lipoprotein particles. Finally, APOE also has a heparin-binding activity and binds heparan-sulfate proteoglycans on the surface of cells, a property that supports the capture and the receptor-mediated uptake of APOE-containing lipoproteins by cells. A main function of APOE is to mediate lipoprotein clearance through the uptake of chylomicrons, VLDLs, and HDLs by hepatocytes. APOE is also involved in the biosynthesis by the liver of VLDLs as well as their uptake by peripheral tissues ensuring the delivery of triglycerides and energy storage in muscle, heart and adipose tissues. By participating in the lipoprotein-mediated distribution of lipids among tissues, APOE plays a critical role in plasma and tissues lipid homeostasis. APOE is also involved in two steps of reverse cholesterol transport, the HDLs-mediated transport of cholesterol from peripheral tissues to the liver, and thereby plays an important role in cholesterol homeostasis. First, it is functionally associated with ABCA1 in the biogenesis of HDLs in tissues. Second, it is enriched in circulating HDLs and mediates their uptake by hepatocytes. APOE also plays an important role in lipid transport in the central nervous system, regulating neuron survival and sprouting.</text>
</comment>
<comment type="subunit">
    <text evidence="1">Homotetramer. May interact with ABCA1; functionally associated with ABCA1 in the biogenesis of HDLs. May interact with APP/A4 amyloid-beta peptide; the interaction is extremely stable in vitro but its physiological significance is unclear. May interact with MAPT. May interact with MAP2. In the cerebrospinal fluid, interacts with secreted SORL1. Interacts with PMEL; this allows the loading of PMEL luminal fragment on ILVs to induce fibril nucleation.</text>
</comment>
<comment type="subcellular location">
    <subcellularLocation>
        <location evidence="1">Secreted</location>
    </subcellularLocation>
    <subcellularLocation>
        <location evidence="1">Secreted</location>
        <location evidence="1">Extracellular space</location>
    </subcellularLocation>
    <subcellularLocation>
        <location evidence="1">Secreted</location>
        <location evidence="1">Extracellular space</location>
        <location evidence="1">Extracellular matrix</location>
    </subcellularLocation>
    <subcellularLocation>
        <location evidence="1">Extracellular vesicle</location>
    </subcellularLocation>
    <subcellularLocation>
        <location evidence="1">Endosome</location>
        <location evidence="1">Multivesicular body</location>
    </subcellularLocation>
    <text evidence="1">In the plasma, APOE is associated with chylomicrons, chylomicrons remnants, VLDL, LDL and HDL lipoproteins. Lipid poor oligomeric APOE is associated with the extracellular matrix in a calcium- and heparan-sulfate proteoglycans-dependent manner. Lipidation induces the release from the extracellular matrix. Colocalizes with CD63 and PMEL at exosomes and in intraluminal vesicles within multivesicular endosomes.</text>
</comment>
<comment type="PTM">
    <text evidence="1">APOE exists as multiple glycosylated and sialylated glycoforms within cells and in plasma. The extent of glycosylation and sialylation are tissue and context specific.</text>
</comment>
<comment type="PTM">
    <text evidence="1">Glycated in plasma VLDL.</text>
</comment>
<comment type="PTM">
    <text evidence="1">Phosphorylated by FAM20C in the extracellular medium.</text>
</comment>
<comment type="similarity">
    <text evidence="5">Belongs to the apolipoprotein A1/A4/E family.</text>
</comment>